<gene>
    <name evidence="1" type="primary">zapD</name>
    <name type="ordered locus">E2348C_0106</name>
</gene>
<protein>
    <recommendedName>
        <fullName evidence="1">Cell division protein ZapD</fullName>
    </recommendedName>
    <alternativeName>
        <fullName evidence="1">Z ring-associated protein D</fullName>
    </alternativeName>
</protein>
<comment type="function">
    <text evidence="1">Cell division factor that enhances FtsZ-ring assembly. Directly interacts with FtsZ and promotes bundling of FtsZ protofilaments, with a reduction in FtsZ GTPase activity.</text>
</comment>
<comment type="subunit">
    <text evidence="1">Interacts with FtsZ.</text>
</comment>
<comment type="subcellular location">
    <subcellularLocation>
        <location evidence="1">Cytoplasm</location>
    </subcellularLocation>
    <text evidence="1">Localizes to mid-cell in an FtsZ-dependent manner.</text>
</comment>
<comment type="similarity">
    <text evidence="1">Belongs to the ZapD family.</text>
</comment>
<accession>B7UIF1</accession>
<reference key="1">
    <citation type="journal article" date="2009" name="J. Bacteriol.">
        <title>Complete genome sequence and comparative genome analysis of enteropathogenic Escherichia coli O127:H6 strain E2348/69.</title>
        <authorList>
            <person name="Iguchi A."/>
            <person name="Thomson N.R."/>
            <person name="Ogura Y."/>
            <person name="Saunders D."/>
            <person name="Ooka T."/>
            <person name="Henderson I.R."/>
            <person name="Harris D."/>
            <person name="Asadulghani M."/>
            <person name="Kurokawa K."/>
            <person name="Dean P."/>
            <person name="Kenny B."/>
            <person name="Quail M.A."/>
            <person name="Thurston S."/>
            <person name="Dougan G."/>
            <person name="Hayashi T."/>
            <person name="Parkhill J."/>
            <person name="Frankel G."/>
        </authorList>
    </citation>
    <scope>NUCLEOTIDE SEQUENCE [LARGE SCALE GENOMIC DNA]</scope>
    <source>
        <strain>E2348/69 / EPEC</strain>
    </source>
</reference>
<proteinExistence type="inferred from homology"/>
<evidence type="ECO:0000255" key="1">
    <source>
        <dbReference type="HAMAP-Rule" id="MF_01092"/>
    </source>
</evidence>
<name>ZAPD_ECO27</name>
<organism>
    <name type="scientific">Escherichia coli O127:H6 (strain E2348/69 / EPEC)</name>
    <dbReference type="NCBI Taxonomy" id="574521"/>
    <lineage>
        <taxon>Bacteria</taxon>
        <taxon>Pseudomonadati</taxon>
        <taxon>Pseudomonadota</taxon>
        <taxon>Gammaproteobacteria</taxon>
        <taxon>Enterobacterales</taxon>
        <taxon>Enterobacteriaceae</taxon>
        <taxon>Escherichia</taxon>
    </lineage>
</organism>
<feature type="chain" id="PRO_1000149888" description="Cell division protein ZapD">
    <location>
        <begin position="1"/>
        <end position="247"/>
    </location>
</feature>
<dbReference type="EMBL" id="FM180568">
    <property type="protein sequence ID" value="CAS07654.1"/>
    <property type="molecule type" value="Genomic_DNA"/>
</dbReference>
<dbReference type="RefSeq" id="WP_001194731.1">
    <property type="nucleotide sequence ID" value="NC_011601.1"/>
</dbReference>
<dbReference type="SMR" id="B7UIF1"/>
<dbReference type="KEGG" id="ecg:E2348C_0106"/>
<dbReference type="HOGENOM" id="CLU_076303_0_0_6"/>
<dbReference type="Proteomes" id="UP000008205">
    <property type="component" value="Chromosome"/>
</dbReference>
<dbReference type="GO" id="GO:0032153">
    <property type="term" value="C:cell division site"/>
    <property type="evidence" value="ECO:0007669"/>
    <property type="project" value="TreeGrafter"/>
</dbReference>
<dbReference type="GO" id="GO:0005737">
    <property type="term" value="C:cytoplasm"/>
    <property type="evidence" value="ECO:0007669"/>
    <property type="project" value="UniProtKB-SubCell"/>
</dbReference>
<dbReference type="GO" id="GO:0000917">
    <property type="term" value="P:division septum assembly"/>
    <property type="evidence" value="ECO:0007669"/>
    <property type="project" value="UniProtKB-KW"/>
</dbReference>
<dbReference type="GO" id="GO:0043093">
    <property type="term" value="P:FtsZ-dependent cytokinesis"/>
    <property type="evidence" value="ECO:0007669"/>
    <property type="project" value="UniProtKB-UniRule"/>
</dbReference>
<dbReference type="FunFam" id="1.10.3900.10:FF:000001">
    <property type="entry name" value="Cell division protein ZapD"/>
    <property type="match status" value="1"/>
</dbReference>
<dbReference type="FunFam" id="2.60.440.10:FF:000001">
    <property type="entry name" value="Cell division protein ZapD"/>
    <property type="match status" value="1"/>
</dbReference>
<dbReference type="Gene3D" id="1.10.3900.10">
    <property type="entry name" value="YacF-like"/>
    <property type="match status" value="1"/>
</dbReference>
<dbReference type="Gene3D" id="2.60.440.10">
    <property type="entry name" value="YacF-like domains"/>
    <property type="match status" value="1"/>
</dbReference>
<dbReference type="HAMAP" id="MF_01092">
    <property type="entry name" value="ZapD"/>
    <property type="match status" value="1"/>
</dbReference>
<dbReference type="InterPro" id="IPR009777">
    <property type="entry name" value="ZapD"/>
</dbReference>
<dbReference type="InterPro" id="IPR027462">
    <property type="entry name" value="ZapD_C"/>
</dbReference>
<dbReference type="InterPro" id="IPR036268">
    <property type="entry name" value="ZapD_sf"/>
</dbReference>
<dbReference type="NCBIfam" id="NF003653">
    <property type="entry name" value="PRK05287.1-1"/>
    <property type="match status" value="1"/>
</dbReference>
<dbReference type="NCBIfam" id="NF003655">
    <property type="entry name" value="PRK05287.1-3"/>
    <property type="match status" value="1"/>
</dbReference>
<dbReference type="PANTHER" id="PTHR39455">
    <property type="entry name" value="CELL DIVISION PROTEIN ZAPD"/>
    <property type="match status" value="1"/>
</dbReference>
<dbReference type="PANTHER" id="PTHR39455:SF1">
    <property type="entry name" value="CELL DIVISION PROTEIN ZAPD"/>
    <property type="match status" value="1"/>
</dbReference>
<dbReference type="Pfam" id="PF07072">
    <property type="entry name" value="ZapD"/>
    <property type="match status" value="1"/>
</dbReference>
<dbReference type="SUPFAM" id="SSF160950">
    <property type="entry name" value="YacF-like"/>
    <property type="match status" value="1"/>
</dbReference>
<sequence length="247" mass="28278">MQTQVLFEHPLNEKMRTWLRIEFLIQQLTVNLPIVDHAGALHFFRNVSELLDVFERGEVRTELLKELDRQQRKLQTWIGVPGVDQSRIEALIQQLKAAGSVLISAPRIGQFLREDRLIALVRQRLSIPGGCCSFDLPTLHIWLHLPQAQRDSQVETWIASLNPLTQALTMVLDLIRQSAPFRKQTSLNGFYQDNGGDADLLRLNLSLDSQLYPQISGHKSRFAIRFMPLDSENGQVPERLDFELACC</sequence>
<keyword id="KW-0131">Cell cycle</keyword>
<keyword id="KW-0132">Cell division</keyword>
<keyword id="KW-0963">Cytoplasm</keyword>
<keyword id="KW-1185">Reference proteome</keyword>
<keyword id="KW-0717">Septation</keyword>